<comment type="function">
    <text evidence="1">One of the primary rRNA binding proteins, it binds directly to 16S rRNA where it nucleates assembly of the head domain of the 30S subunit. Is located at the subunit interface close to the decoding center, probably blocks exit of the E-site tRNA.</text>
</comment>
<comment type="subunit">
    <text evidence="1">Part of the 30S ribosomal subunit. Contacts proteins S9 and S11.</text>
</comment>
<comment type="similarity">
    <text evidence="1">Belongs to the universal ribosomal protein uS7 family.</text>
</comment>
<name>RS7_CORJK</name>
<accession>Q4JT38</accession>
<dbReference type="EMBL" id="CR931997">
    <property type="protein sequence ID" value="CAI38019.1"/>
    <property type="molecule type" value="Genomic_DNA"/>
</dbReference>
<dbReference type="RefSeq" id="WP_005291999.1">
    <property type="nucleotide sequence ID" value="NC_007164.1"/>
</dbReference>
<dbReference type="SMR" id="Q4JT38"/>
<dbReference type="STRING" id="306537.jk1841"/>
<dbReference type="GeneID" id="92739465"/>
<dbReference type="KEGG" id="cjk:jk1841"/>
<dbReference type="eggNOG" id="COG0049">
    <property type="taxonomic scope" value="Bacteria"/>
</dbReference>
<dbReference type="HOGENOM" id="CLU_072226_1_1_11"/>
<dbReference type="OrthoDB" id="9807653at2"/>
<dbReference type="Proteomes" id="UP000000545">
    <property type="component" value="Chromosome"/>
</dbReference>
<dbReference type="GO" id="GO:0015935">
    <property type="term" value="C:small ribosomal subunit"/>
    <property type="evidence" value="ECO:0007669"/>
    <property type="project" value="InterPro"/>
</dbReference>
<dbReference type="GO" id="GO:0019843">
    <property type="term" value="F:rRNA binding"/>
    <property type="evidence" value="ECO:0007669"/>
    <property type="project" value="UniProtKB-UniRule"/>
</dbReference>
<dbReference type="GO" id="GO:0003735">
    <property type="term" value="F:structural constituent of ribosome"/>
    <property type="evidence" value="ECO:0007669"/>
    <property type="project" value="InterPro"/>
</dbReference>
<dbReference type="GO" id="GO:0000049">
    <property type="term" value="F:tRNA binding"/>
    <property type="evidence" value="ECO:0007669"/>
    <property type="project" value="UniProtKB-UniRule"/>
</dbReference>
<dbReference type="GO" id="GO:0006412">
    <property type="term" value="P:translation"/>
    <property type="evidence" value="ECO:0007669"/>
    <property type="project" value="UniProtKB-UniRule"/>
</dbReference>
<dbReference type="CDD" id="cd14869">
    <property type="entry name" value="uS7_Bacteria"/>
    <property type="match status" value="1"/>
</dbReference>
<dbReference type="FunFam" id="1.10.455.10:FF:000001">
    <property type="entry name" value="30S ribosomal protein S7"/>
    <property type="match status" value="1"/>
</dbReference>
<dbReference type="Gene3D" id="1.10.455.10">
    <property type="entry name" value="Ribosomal protein S7 domain"/>
    <property type="match status" value="1"/>
</dbReference>
<dbReference type="HAMAP" id="MF_00480_B">
    <property type="entry name" value="Ribosomal_uS7_B"/>
    <property type="match status" value="1"/>
</dbReference>
<dbReference type="InterPro" id="IPR000235">
    <property type="entry name" value="Ribosomal_uS7"/>
</dbReference>
<dbReference type="InterPro" id="IPR005717">
    <property type="entry name" value="Ribosomal_uS7_bac/org-type"/>
</dbReference>
<dbReference type="InterPro" id="IPR020606">
    <property type="entry name" value="Ribosomal_uS7_CS"/>
</dbReference>
<dbReference type="InterPro" id="IPR023798">
    <property type="entry name" value="Ribosomal_uS7_dom"/>
</dbReference>
<dbReference type="InterPro" id="IPR036823">
    <property type="entry name" value="Ribosomal_uS7_dom_sf"/>
</dbReference>
<dbReference type="NCBIfam" id="TIGR01029">
    <property type="entry name" value="rpsG_bact"/>
    <property type="match status" value="1"/>
</dbReference>
<dbReference type="PANTHER" id="PTHR11205">
    <property type="entry name" value="RIBOSOMAL PROTEIN S7"/>
    <property type="match status" value="1"/>
</dbReference>
<dbReference type="Pfam" id="PF00177">
    <property type="entry name" value="Ribosomal_S7"/>
    <property type="match status" value="1"/>
</dbReference>
<dbReference type="PIRSF" id="PIRSF002122">
    <property type="entry name" value="RPS7p_RPS7a_RPS5e_RPS7o"/>
    <property type="match status" value="1"/>
</dbReference>
<dbReference type="SUPFAM" id="SSF47973">
    <property type="entry name" value="Ribosomal protein S7"/>
    <property type="match status" value="1"/>
</dbReference>
<dbReference type="PROSITE" id="PS00052">
    <property type="entry name" value="RIBOSOMAL_S7"/>
    <property type="match status" value="1"/>
</dbReference>
<reference key="1">
    <citation type="journal article" date="2005" name="J. Bacteriol.">
        <title>Complete genome sequence and analysis of the multiresistant nosocomial pathogen Corynebacterium jeikeium K411, a lipid-requiring bacterium of the human skin flora.</title>
        <authorList>
            <person name="Tauch A."/>
            <person name="Kaiser O."/>
            <person name="Hain T."/>
            <person name="Goesmann A."/>
            <person name="Weisshaar B."/>
            <person name="Albersmeier A."/>
            <person name="Bekel T."/>
            <person name="Bischoff N."/>
            <person name="Brune I."/>
            <person name="Chakraborty T."/>
            <person name="Kalinowski J."/>
            <person name="Meyer F."/>
            <person name="Rupp O."/>
            <person name="Schneiker S."/>
            <person name="Viehoever P."/>
            <person name="Puehler A."/>
        </authorList>
    </citation>
    <scope>NUCLEOTIDE SEQUENCE [LARGE SCALE GENOMIC DNA]</scope>
    <source>
        <strain>K411</strain>
    </source>
</reference>
<gene>
    <name evidence="1" type="primary">rpsG</name>
    <name type="ordered locus">jk1841</name>
</gene>
<sequence length="156" mass="17554">MPRKGPAPSRQLVKDPVYGDVLVSQLVNKVLLDGKKSTAERIVYGALEQCREKTGTDPILTLKKALDNVKPALEVRSRRVGGATYQVPVEVRPGRSTTLALRWLVTFTRQRRENTMTERLANEILDASNGLGASVKRREDTHKMAEANRAFAHYRW</sequence>
<organism>
    <name type="scientific">Corynebacterium jeikeium (strain K411)</name>
    <dbReference type="NCBI Taxonomy" id="306537"/>
    <lineage>
        <taxon>Bacteria</taxon>
        <taxon>Bacillati</taxon>
        <taxon>Actinomycetota</taxon>
        <taxon>Actinomycetes</taxon>
        <taxon>Mycobacteriales</taxon>
        <taxon>Corynebacteriaceae</taxon>
        <taxon>Corynebacterium</taxon>
    </lineage>
</organism>
<evidence type="ECO:0000255" key="1">
    <source>
        <dbReference type="HAMAP-Rule" id="MF_00480"/>
    </source>
</evidence>
<evidence type="ECO:0000305" key="2"/>
<proteinExistence type="inferred from homology"/>
<protein>
    <recommendedName>
        <fullName evidence="1">Small ribosomal subunit protein uS7</fullName>
    </recommendedName>
    <alternativeName>
        <fullName evidence="2">30S ribosomal protein S7</fullName>
    </alternativeName>
</protein>
<keyword id="KW-1185">Reference proteome</keyword>
<keyword id="KW-0687">Ribonucleoprotein</keyword>
<keyword id="KW-0689">Ribosomal protein</keyword>
<keyword id="KW-0694">RNA-binding</keyword>
<keyword id="KW-0699">rRNA-binding</keyword>
<keyword id="KW-0820">tRNA-binding</keyword>
<feature type="chain" id="PRO_0000226494" description="Small ribosomal subunit protein uS7">
    <location>
        <begin position="1"/>
        <end position="156"/>
    </location>
</feature>